<reference key="1">
    <citation type="submission" date="2008-05" db="EMBL/GenBank/DDBJ databases">
        <title>Complete sequence of Chlorobium limicola DSM 245.</title>
        <authorList>
            <consortium name="US DOE Joint Genome Institute"/>
            <person name="Lucas S."/>
            <person name="Copeland A."/>
            <person name="Lapidus A."/>
            <person name="Glavina del Rio T."/>
            <person name="Dalin E."/>
            <person name="Tice H."/>
            <person name="Bruce D."/>
            <person name="Goodwin L."/>
            <person name="Pitluck S."/>
            <person name="Schmutz J."/>
            <person name="Larimer F."/>
            <person name="Land M."/>
            <person name="Hauser L."/>
            <person name="Kyrpides N."/>
            <person name="Ovchinnikova G."/>
            <person name="Zhao F."/>
            <person name="Li T."/>
            <person name="Liu Z."/>
            <person name="Overmann J."/>
            <person name="Bryant D.A."/>
            <person name="Richardson P."/>
        </authorList>
    </citation>
    <scope>NUCLEOTIDE SEQUENCE [LARGE SCALE GENOMIC DNA]</scope>
    <source>
        <strain>DSM 245 / NBRC 103803 / 6330</strain>
    </source>
</reference>
<dbReference type="EC" id="2.1.1.77" evidence="1"/>
<dbReference type="EMBL" id="CP001097">
    <property type="protein sequence ID" value="ACD89356.1"/>
    <property type="molecule type" value="Genomic_DNA"/>
</dbReference>
<dbReference type="RefSeq" id="WP_012465237.1">
    <property type="nucleotide sequence ID" value="NC_010803.1"/>
</dbReference>
<dbReference type="SMR" id="B3EEX3"/>
<dbReference type="STRING" id="290315.Clim_0261"/>
<dbReference type="KEGG" id="cli:Clim_0261"/>
<dbReference type="eggNOG" id="COG2518">
    <property type="taxonomic scope" value="Bacteria"/>
</dbReference>
<dbReference type="HOGENOM" id="CLU_055432_2_0_10"/>
<dbReference type="OrthoDB" id="9810066at2"/>
<dbReference type="Proteomes" id="UP000008841">
    <property type="component" value="Chromosome"/>
</dbReference>
<dbReference type="GO" id="GO:0005737">
    <property type="term" value="C:cytoplasm"/>
    <property type="evidence" value="ECO:0007669"/>
    <property type="project" value="UniProtKB-SubCell"/>
</dbReference>
<dbReference type="GO" id="GO:0004719">
    <property type="term" value="F:protein-L-isoaspartate (D-aspartate) O-methyltransferase activity"/>
    <property type="evidence" value="ECO:0007669"/>
    <property type="project" value="UniProtKB-UniRule"/>
</dbReference>
<dbReference type="GO" id="GO:0032259">
    <property type="term" value="P:methylation"/>
    <property type="evidence" value="ECO:0007669"/>
    <property type="project" value="UniProtKB-KW"/>
</dbReference>
<dbReference type="GO" id="GO:0036211">
    <property type="term" value="P:protein modification process"/>
    <property type="evidence" value="ECO:0007669"/>
    <property type="project" value="UniProtKB-UniRule"/>
</dbReference>
<dbReference type="GO" id="GO:0030091">
    <property type="term" value="P:protein repair"/>
    <property type="evidence" value="ECO:0007669"/>
    <property type="project" value="UniProtKB-UniRule"/>
</dbReference>
<dbReference type="FunFam" id="3.40.50.150:FF:000010">
    <property type="entry name" value="Protein-L-isoaspartate O-methyltransferase"/>
    <property type="match status" value="1"/>
</dbReference>
<dbReference type="Gene3D" id="3.40.50.150">
    <property type="entry name" value="Vaccinia Virus protein VP39"/>
    <property type="match status" value="1"/>
</dbReference>
<dbReference type="HAMAP" id="MF_00090">
    <property type="entry name" value="PIMT"/>
    <property type="match status" value="1"/>
</dbReference>
<dbReference type="InterPro" id="IPR000682">
    <property type="entry name" value="PCMT"/>
</dbReference>
<dbReference type="InterPro" id="IPR029063">
    <property type="entry name" value="SAM-dependent_MTases_sf"/>
</dbReference>
<dbReference type="NCBIfam" id="TIGR00080">
    <property type="entry name" value="pimt"/>
    <property type="match status" value="1"/>
</dbReference>
<dbReference type="NCBIfam" id="NF001453">
    <property type="entry name" value="PRK00312.1"/>
    <property type="match status" value="1"/>
</dbReference>
<dbReference type="PANTHER" id="PTHR11579">
    <property type="entry name" value="PROTEIN-L-ISOASPARTATE O-METHYLTRANSFERASE"/>
    <property type="match status" value="1"/>
</dbReference>
<dbReference type="PANTHER" id="PTHR11579:SF0">
    <property type="entry name" value="PROTEIN-L-ISOASPARTATE(D-ASPARTATE) O-METHYLTRANSFERASE"/>
    <property type="match status" value="1"/>
</dbReference>
<dbReference type="Pfam" id="PF01135">
    <property type="entry name" value="PCMT"/>
    <property type="match status" value="1"/>
</dbReference>
<dbReference type="SUPFAM" id="SSF53335">
    <property type="entry name" value="S-adenosyl-L-methionine-dependent methyltransferases"/>
    <property type="match status" value="1"/>
</dbReference>
<dbReference type="PROSITE" id="PS01279">
    <property type="entry name" value="PCMT"/>
    <property type="match status" value="1"/>
</dbReference>
<sequence>MDASDRSMAVKRMEMVQSLRQKGLVNERVLDAMQRIERHRFVDRESSVSAYEDSAYPIGYGQTISQPYTVAYMTTLLLERCPPPGKVLEIGTGSGYQAAILDALGYRVYSVERIPELHDRVVGLFRSLGLAISCRVGDGSLGWEEEAPFDGIMVTAAAPRCPEHLLEQLGDNGCLVIPVGEHNMQQMTVYRRVGERFEKELFHHFAFVPLIGREGWN</sequence>
<gene>
    <name evidence="1" type="primary">pcm</name>
    <name type="ordered locus">Clim_0261</name>
</gene>
<comment type="function">
    <text evidence="1">Catalyzes the methyl esterification of L-isoaspartyl residues in peptides and proteins that result from spontaneous decomposition of normal L-aspartyl and L-asparaginyl residues. It plays a role in the repair and/or degradation of damaged proteins.</text>
</comment>
<comment type="catalytic activity">
    <reaction evidence="1">
        <text>[protein]-L-isoaspartate + S-adenosyl-L-methionine = [protein]-L-isoaspartate alpha-methyl ester + S-adenosyl-L-homocysteine</text>
        <dbReference type="Rhea" id="RHEA:12705"/>
        <dbReference type="Rhea" id="RHEA-COMP:12143"/>
        <dbReference type="Rhea" id="RHEA-COMP:12144"/>
        <dbReference type="ChEBI" id="CHEBI:57856"/>
        <dbReference type="ChEBI" id="CHEBI:59789"/>
        <dbReference type="ChEBI" id="CHEBI:90596"/>
        <dbReference type="ChEBI" id="CHEBI:90598"/>
        <dbReference type="EC" id="2.1.1.77"/>
    </reaction>
</comment>
<comment type="subcellular location">
    <subcellularLocation>
        <location evidence="1">Cytoplasm</location>
    </subcellularLocation>
</comment>
<comment type="similarity">
    <text evidence="1">Belongs to the methyltransferase superfamily. L-isoaspartyl/D-aspartyl protein methyltransferase family.</text>
</comment>
<evidence type="ECO:0000255" key="1">
    <source>
        <dbReference type="HAMAP-Rule" id="MF_00090"/>
    </source>
</evidence>
<protein>
    <recommendedName>
        <fullName evidence="1">Protein-L-isoaspartate O-methyltransferase</fullName>
        <ecNumber evidence="1">2.1.1.77</ecNumber>
    </recommendedName>
    <alternativeName>
        <fullName evidence="1">L-isoaspartyl protein carboxyl methyltransferase</fullName>
    </alternativeName>
    <alternativeName>
        <fullName evidence="1">Protein L-isoaspartyl methyltransferase</fullName>
    </alternativeName>
    <alternativeName>
        <fullName evidence="1">Protein-beta-aspartate methyltransferase</fullName>
        <shortName evidence="1">PIMT</shortName>
    </alternativeName>
</protein>
<keyword id="KW-0963">Cytoplasm</keyword>
<keyword id="KW-0489">Methyltransferase</keyword>
<keyword id="KW-0949">S-adenosyl-L-methionine</keyword>
<keyword id="KW-0808">Transferase</keyword>
<proteinExistence type="inferred from homology"/>
<name>PIMT_CHLL2</name>
<accession>B3EEX3</accession>
<organism>
    <name type="scientific">Chlorobium limicola (strain DSM 245 / NBRC 103803 / 6330)</name>
    <dbReference type="NCBI Taxonomy" id="290315"/>
    <lineage>
        <taxon>Bacteria</taxon>
        <taxon>Pseudomonadati</taxon>
        <taxon>Chlorobiota</taxon>
        <taxon>Chlorobiia</taxon>
        <taxon>Chlorobiales</taxon>
        <taxon>Chlorobiaceae</taxon>
        <taxon>Chlorobium/Pelodictyon group</taxon>
        <taxon>Chlorobium</taxon>
    </lineage>
</organism>
<feature type="chain" id="PRO_0000351842" description="Protein-L-isoaspartate O-methyltransferase">
    <location>
        <begin position="1"/>
        <end position="217"/>
    </location>
</feature>
<feature type="active site" evidence="1">
    <location>
        <position position="65"/>
    </location>
</feature>